<name>RS20_CLOD6</name>
<gene>
    <name evidence="1" type="primary">rpsT</name>
    <name type="ordered locus">CD630_24730</name>
</gene>
<feature type="chain" id="PRO_0000260111" description="Small ribosomal subunit protein bS20">
    <location>
        <begin position="1"/>
        <end position="88"/>
    </location>
</feature>
<protein>
    <recommendedName>
        <fullName evidence="1">Small ribosomal subunit protein bS20</fullName>
    </recommendedName>
    <alternativeName>
        <fullName evidence="2">30S ribosomal protein S20</fullName>
    </alternativeName>
</protein>
<sequence>MANIKSAKKRISVIEKKTALNRVRKSQIKTAIRRFEDAVAAGNREDAVAKFQYAQKRIYQVASKGTIHKNAAARKVAKLAQKLNGMNA</sequence>
<reference key="1">
    <citation type="journal article" date="2006" name="Nat. Genet.">
        <title>The multidrug-resistant human pathogen Clostridium difficile has a highly mobile, mosaic genome.</title>
        <authorList>
            <person name="Sebaihia M."/>
            <person name="Wren B.W."/>
            <person name="Mullany P."/>
            <person name="Fairweather N.F."/>
            <person name="Minton N."/>
            <person name="Stabler R."/>
            <person name="Thomson N.R."/>
            <person name="Roberts A.P."/>
            <person name="Cerdeno-Tarraga A.M."/>
            <person name="Wang H."/>
            <person name="Holden M.T.G."/>
            <person name="Wright A."/>
            <person name="Churcher C."/>
            <person name="Quail M.A."/>
            <person name="Baker S."/>
            <person name="Bason N."/>
            <person name="Brooks K."/>
            <person name="Chillingworth T."/>
            <person name="Cronin A."/>
            <person name="Davis P."/>
            <person name="Dowd L."/>
            <person name="Fraser A."/>
            <person name="Feltwell T."/>
            <person name="Hance Z."/>
            <person name="Holroyd S."/>
            <person name="Jagels K."/>
            <person name="Moule S."/>
            <person name="Mungall K."/>
            <person name="Price C."/>
            <person name="Rabbinowitsch E."/>
            <person name="Sharp S."/>
            <person name="Simmonds M."/>
            <person name="Stevens K."/>
            <person name="Unwin L."/>
            <person name="Whithead S."/>
            <person name="Dupuy B."/>
            <person name="Dougan G."/>
            <person name="Barrell B."/>
            <person name="Parkhill J."/>
        </authorList>
    </citation>
    <scope>NUCLEOTIDE SEQUENCE [LARGE SCALE GENOMIC DNA]</scope>
    <source>
        <strain>630</strain>
    </source>
</reference>
<dbReference type="EMBL" id="AM180355">
    <property type="protein sequence ID" value="CAJ69360.1"/>
    <property type="molecule type" value="Genomic_DNA"/>
</dbReference>
<dbReference type="RefSeq" id="WP_009890686.1">
    <property type="nucleotide sequence ID" value="NZ_JAUPES010000003.1"/>
</dbReference>
<dbReference type="RefSeq" id="YP_001088987.1">
    <property type="nucleotide sequence ID" value="NC_009089.1"/>
</dbReference>
<dbReference type="SMR" id="Q182G1"/>
<dbReference type="STRING" id="272563.CD630_24730"/>
<dbReference type="EnsemblBacteria" id="CAJ69360">
    <property type="protein sequence ID" value="CAJ69360"/>
    <property type="gene ID" value="CD630_24730"/>
</dbReference>
<dbReference type="GeneID" id="66354871"/>
<dbReference type="KEGG" id="cdf:CD630_24730"/>
<dbReference type="KEGG" id="pdc:CDIF630_02719"/>
<dbReference type="PATRIC" id="fig|272563.120.peg.2612"/>
<dbReference type="eggNOG" id="COG0268">
    <property type="taxonomic scope" value="Bacteria"/>
</dbReference>
<dbReference type="OrthoDB" id="9808392at2"/>
<dbReference type="PhylomeDB" id="Q182G1"/>
<dbReference type="BioCyc" id="PDIF272563:G12WB-2628-MONOMER"/>
<dbReference type="Proteomes" id="UP000001978">
    <property type="component" value="Chromosome"/>
</dbReference>
<dbReference type="GO" id="GO:0005829">
    <property type="term" value="C:cytosol"/>
    <property type="evidence" value="ECO:0007669"/>
    <property type="project" value="TreeGrafter"/>
</dbReference>
<dbReference type="GO" id="GO:0015935">
    <property type="term" value="C:small ribosomal subunit"/>
    <property type="evidence" value="ECO:0007669"/>
    <property type="project" value="TreeGrafter"/>
</dbReference>
<dbReference type="GO" id="GO:0070181">
    <property type="term" value="F:small ribosomal subunit rRNA binding"/>
    <property type="evidence" value="ECO:0007669"/>
    <property type="project" value="TreeGrafter"/>
</dbReference>
<dbReference type="GO" id="GO:0003735">
    <property type="term" value="F:structural constituent of ribosome"/>
    <property type="evidence" value="ECO:0007669"/>
    <property type="project" value="InterPro"/>
</dbReference>
<dbReference type="GO" id="GO:0006412">
    <property type="term" value="P:translation"/>
    <property type="evidence" value="ECO:0007669"/>
    <property type="project" value="UniProtKB-UniRule"/>
</dbReference>
<dbReference type="FunFam" id="1.20.58.110:FF:000001">
    <property type="entry name" value="30S ribosomal protein S20"/>
    <property type="match status" value="1"/>
</dbReference>
<dbReference type="Gene3D" id="1.20.58.110">
    <property type="entry name" value="Ribosomal protein S20"/>
    <property type="match status" value="1"/>
</dbReference>
<dbReference type="HAMAP" id="MF_00500">
    <property type="entry name" value="Ribosomal_bS20"/>
    <property type="match status" value="1"/>
</dbReference>
<dbReference type="InterPro" id="IPR002583">
    <property type="entry name" value="Ribosomal_bS20"/>
</dbReference>
<dbReference type="InterPro" id="IPR036510">
    <property type="entry name" value="Ribosomal_bS20_sf"/>
</dbReference>
<dbReference type="NCBIfam" id="TIGR00029">
    <property type="entry name" value="S20"/>
    <property type="match status" value="1"/>
</dbReference>
<dbReference type="PANTHER" id="PTHR33398">
    <property type="entry name" value="30S RIBOSOMAL PROTEIN S20"/>
    <property type="match status" value="1"/>
</dbReference>
<dbReference type="PANTHER" id="PTHR33398:SF1">
    <property type="entry name" value="SMALL RIBOSOMAL SUBUNIT PROTEIN BS20C"/>
    <property type="match status" value="1"/>
</dbReference>
<dbReference type="Pfam" id="PF01649">
    <property type="entry name" value="Ribosomal_S20p"/>
    <property type="match status" value="1"/>
</dbReference>
<dbReference type="SUPFAM" id="SSF46992">
    <property type="entry name" value="Ribosomal protein S20"/>
    <property type="match status" value="1"/>
</dbReference>
<keyword id="KW-1185">Reference proteome</keyword>
<keyword id="KW-0687">Ribonucleoprotein</keyword>
<keyword id="KW-0689">Ribosomal protein</keyword>
<keyword id="KW-0694">RNA-binding</keyword>
<keyword id="KW-0699">rRNA-binding</keyword>
<evidence type="ECO:0000255" key="1">
    <source>
        <dbReference type="HAMAP-Rule" id="MF_00500"/>
    </source>
</evidence>
<evidence type="ECO:0000305" key="2"/>
<organism>
    <name type="scientific">Clostridioides difficile (strain 630)</name>
    <name type="common">Peptoclostridium difficile</name>
    <dbReference type="NCBI Taxonomy" id="272563"/>
    <lineage>
        <taxon>Bacteria</taxon>
        <taxon>Bacillati</taxon>
        <taxon>Bacillota</taxon>
        <taxon>Clostridia</taxon>
        <taxon>Peptostreptococcales</taxon>
        <taxon>Peptostreptococcaceae</taxon>
        <taxon>Clostridioides</taxon>
    </lineage>
</organism>
<comment type="function">
    <text evidence="1">Binds directly to 16S ribosomal RNA.</text>
</comment>
<comment type="similarity">
    <text evidence="1">Belongs to the bacterial ribosomal protein bS20 family.</text>
</comment>
<proteinExistence type="inferred from homology"/>
<accession>Q182G1</accession>